<dbReference type="EMBL" id="AC124821">
    <property type="status" value="NOT_ANNOTATED_CDS"/>
    <property type="molecule type" value="Genomic_DNA"/>
</dbReference>
<dbReference type="EMBL" id="CH466548">
    <property type="protein sequence ID" value="EDL00265.1"/>
    <property type="molecule type" value="Genomic_DNA"/>
</dbReference>
<dbReference type="EMBL" id="BC051082">
    <property type="status" value="NOT_ANNOTATED_CDS"/>
    <property type="molecule type" value="mRNA"/>
</dbReference>
<dbReference type="EMBL" id="Z22729">
    <property type="protein sequence ID" value="CAA80422.1"/>
    <property type="molecule type" value="Genomic_DNA"/>
</dbReference>
<dbReference type="EMBL" id="X82402">
    <property type="protein sequence ID" value="CAA57796.1"/>
    <property type="molecule type" value="mRNA"/>
</dbReference>
<dbReference type="EMBL" id="X93167">
    <property type="protein sequence ID" value="CAA63654.1"/>
    <property type="molecule type" value="mRNA"/>
</dbReference>
<dbReference type="EMBL" id="M18194">
    <property type="protein sequence ID" value="AAA37636.1"/>
    <property type="molecule type" value="mRNA"/>
</dbReference>
<dbReference type="EMBL" id="S45680">
    <property type="protein sequence ID" value="AAB23491.1"/>
    <property type="molecule type" value="mRNA"/>
</dbReference>
<dbReference type="CCDS" id="CCDS15031.1">
    <molecule id="P11276-1"/>
</dbReference>
<dbReference type="PIR" id="A49173">
    <property type="entry name" value="A49173"/>
</dbReference>
<dbReference type="PIR" id="I48349">
    <property type="entry name" value="I48349"/>
</dbReference>
<dbReference type="RefSeq" id="NP_034363.1">
    <molecule id="P11276-1"/>
    <property type="nucleotide sequence ID" value="NM_010233.2"/>
</dbReference>
<dbReference type="PDB" id="1MFN">
    <property type="method" value="NMR"/>
    <property type="chains" value="A=1447-1630"/>
</dbReference>
<dbReference type="PDB" id="2MFN">
    <property type="method" value="NMR"/>
    <property type="chains" value="A=1447-1630"/>
</dbReference>
<dbReference type="PDBsum" id="1MFN"/>
<dbReference type="PDBsum" id="2MFN"/>
<dbReference type="SMR" id="P11276"/>
<dbReference type="BioGRID" id="199719">
    <property type="interactions" value="32"/>
</dbReference>
<dbReference type="CORUM" id="P11276"/>
<dbReference type="ELM" id="P11276"/>
<dbReference type="FunCoup" id="P11276">
    <property type="interactions" value="776"/>
</dbReference>
<dbReference type="IntAct" id="P11276">
    <property type="interactions" value="6"/>
</dbReference>
<dbReference type="MINT" id="P11276"/>
<dbReference type="STRING" id="10090.ENSMUSP00000054499"/>
<dbReference type="GlyCosmos" id="P11276">
    <property type="glycosylation" value="8 sites, No reported glycans"/>
</dbReference>
<dbReference type="GlyGen" id="P11276">
    <property type="glycosylation" value="12 sites, 3 N-linked glycans (5 sites), 1 O-linked glycan (3 sites)"/>
</dbReference>
<dbReference type="iPTMnet" id="P11276"/>
<dbReference type="PhosphoSitePlus" id="P11276"/>
<dbReference type="SwissPalm" id="P11276"/>
<dbReference type="CPTAC" id="non-CPTAC-3296"/>
<dbReference type="CPTAC" id="non-CPTAC-3538"/>
<dbReference type="jPOST" id="P11276"/>
<dbReference type="PaxDb" id="10090-ENSMUSP00000054499"/>
<dbReference type="PeptideAtlas" id="P11276"/>
<dbReference type="ProteomicsDB" id="271764">
    <molecule id="P11276-1"/>
</dbReference>
<dbReference type="Pumba" id="P11276"/>
<dbReference type="ABCD" id="P11276">
    <property type="antibodies" value="8 sequenced antibodies"/>
</dbReference>
<dbReference type="Antibodypedia" id="3522">
    <property type="antibodies" value="2938 antibodies from 49 providers"/>
</dbReference>
<dbReference type="DNASU" id="14268"/>
<dbReference type="Ensembl" id="ENSMUST00000055226.13">
    <molecule id="P11276-1"/>
    <property type="protein sequence ID" value="ENSMUSP00000054499.7"/>
    <property type="gene ID" value="ENSMUSG00000026193.16"/>
</dbReference>
<dbReference type="GeneID" id="14268"/>
<dbReference type="KEGG" id="mmu:14268"/>
<dbReference type="UCSC" id="uc007bju.2">
    <molecule id="P11276-1"/>
    <property type="organism name" value="mouse"/>
</dbReference>
<dbReference type="AGR" id="MGI:95566"/>
<dbReference type="CTD" id="2335"/>
<dbReference type="MGI" id="MGI:95566">
    <property type="gene designation" value="Fn1"/>
</dbReference>
<dbReference type="VEuPathDB" id="HostDB:ENSMUSG00000026193"/>
<dbReference type="eggNOG" id="ENOG502QPTS">
    <property type="taxonomic scope" value="Eukaryota"/>
</dbReference>
<dbReference type="GeneTree" id="ENSGT00940000155126"/>
<dbReference type="InParanoid" id="P11276"/>
<dbReference type="OMA" id="GHCITDS"/>
<dbReference type="OrthoDB" id="261433at2759"/>
<dbReference type="PhylomeDB" id="P11276"/>
<dbReference type="TreeFam" id="TF329915"/>
<dbReference type="Reactome" id="R-MMU-114608">
    <property type="pathway name" value="Platelet degranulation"/>
</dbReference>
<dbReference type="Reactome" id="R-MMU-1474228">
    <property type="pathway name" value="Degradation of the extracellular matrix"/>
</dbReference>
<dbReference type="Reactome" id="R-MMU-1474244">
    <property type="pathway name" value="Extracellular matrix organization"/>
</dbReference>
<dbReference type="Reactome" id="R-MMU-1566977">
    <property type="pathway name" value="Fibronectin matrix formation"/>
</dbReference>
<dbReference type="Reactome" id="R-MMU-202733">
    <property type="pathway name" value="Cell surface interactions at the vascular wall"/>
</dbReference>
<dbReference type="Reactome" id="R-MMU-2129379">
    <property type="pathway name" value="Molecules associated with elastic fibres"/>
</dbReference>
<dbReference type="Reactome" id="R-MMU-216083">
    <property type="pathway name" value="Integrin cell surface interactions"/>
</dbReference>
<dbReference type="Reactome" id="R-MMU-3000170">
    <property type="pathway name" value="Syndecan interactions"/>
</dbReference>
<dbReference type="Reactome" id="R-MMU-3000178">
    <property type="pathway name" value="ECM proteoglycans"/>
</dbReference>
<dbReference type="Reactome" id="R-MMU-354192">
    <property type="pathway name" value="Integrin signaling"/>
</dbReference>
<dbReference type="Reactome" id="R-MMU-354194">
    <property type="pathway name" value="GRB2:SOS provides linkage to MAPK signaling for Integrins"/>
</dbReference>
<dbReference type="Reactome" id="R-MMU-372708">
    <property type="pathway name" value="p130Cas linkage to MAPK signaling for integrins"/>
</dbReference>
<dbReference type="Reactome" id="R-MMU-381426">
    <property type="pathway name" value="Regulation of Insulin-like Growth Factor (IGF) transport and uptake by Insulin-like Growth Factor Binding Proteins (IGFBPs)"/>
</dbReference>
<dbReference type="Reactome" id="R-MMU-5674135">
    <property type="pathway name" value="MAP2K and MAPK activation"/>
</dbReference>
<dbReference type="Reactome" id="R-MMU-8874081">
    <property type="pathway name" value="MET activates PTK2 signaling"/>
</dbReference>
<dbReference type="Reactome" id="R-MMU-8957275">
    <property type="pathway name" value="Post-translational protein phosphorylation"/>
</dbReference>
<dbReference type="Reactome" id="R-MMU-9634597">
    <property type="pathway name" value="GPER1 signaling"/>
</dbReference>
<dbReference type="Reactome" id="R-MMU-9860927">
    <property type="pathway name" value="Turbulent (oscillatory, disturbed) flow shear stress activates signaling by PIEZO1 and integrins in endothelial cells"/>
</dbReference>
<dbReference type="BioGRID-ORCS" id="14268">
    <property type="hits" value="3 hits in 78 CRISPR screens"/>
</dbReference>
<dbReference type="ChiTaRS" id="Fn1">
    <property type="organism name" value="mouse"/>
</dbReference>
<dbReference type="EvolutionaryTrace" id="P11276"/>
<dbReference type="PRO" id="PR:P11276"/>
<dbReference type="Proteomes" id="UP000000589">
    <property type="component" value="Chromosome 1"/>
</dbReference>
<dbReference type="RNAct" id="P11276">
    <property type="molecule type" value="protein"/>
</dbReference>
<dbReference type="Bgee" id="ENSMUSG00000026193">
    <property type="expression patterns" value="Expressed in vault of skull and 288 other cell types or tissues"/>
</dbReference>
<dbReference type="ExpressionAtlas" id="P11276">
    <property type="expression patterns" value="baseline and differential"/>
</dbReference>
<dbReference type="GO" id="GO:0016324">
    <property type="term" value="C:apical plasma membrane"/>
    <property type="evidence" value="ECO:0000314"/>
    <property type="project" value="MGI"/>
</dbReference>
<dbReference type="GO" id="GO:0005604">
    <property type="term" value="C:basement membrane"/>
    <property type="evidence" value="ECO:0000314"/>
    <property type="project" value="MGI"/>
</dbReference>
<dbReference type="GO" id="GO:0062023">
    <property type="term" value="C:collagen-containing extracellular matrix"/>
    <property type="evidence" value="ECO:0007005"/>
    <property type="project" value="UniProtKB"/>
</dbReference>
<dbReference type="GO" id="GO:0005793">
    <property type="term" value="C:endoplasmic reticulum-Golgi intermediate compartment"/>
    <property type="evidence" value="ECO:0007669"/>
    <property type="project" value="Ensembl"/>
</dbReference>
<dbReference type="GO" id="GO:0070062">
    <property type="term" value="C:extracellular exosome"/>
    <property type="evidence" value="ECO:0007669"/>
    <property type="project" value="Ensembl"/>
</dbReference>
<dbReference type="GO" id="GO:0031012">
    <property type="term" value="C:extracellular matrix"/>
    <property type="evidence" value="ECO:0000314"/>
    <property type="project" value="MGI"/>
</dbReference>
<dbReference type="GO" id="GO:0005615">
    <property type="term" value="C:extracellular space"/>
    <property type="evidence" value="ECO:0000314"/>
    <property type="project" value="UniProt"/>
</dbReference>
<dbReference type="GO" id="GO:0005577">
    <property type="term" value="C:fibrinogen complex"/>
    <property type="evidence" value="ECO:0007669"/>
    <property type="project" value="Ensembl"/>
</dbReference>
<dbReference type="GO" id="GO:0008201">
    <property type="term" value="F:heparin binding"/>
    <property type="evidence" value="ECO:0007669"/>
    <property type="project" value="UniProtKB-KW"/>
</dbReference>
<dbReference type="GO" id="GO:0042802">
    <property type="term" value="F:identical protein binding"/>
    <property type="evidence" value="ECO:0007669"/>
    <property type="project" value="Ensembl"/>
</dbReference>
<dbReference type="GO" id="GO:0005178">
    <property type="term" value="F:integrin binding"/>
    <property type="evidence" value="ECO:0007669"/>
    <property type="project" value="Ensembl"/>
</dbReference>
<dbReference type="GO" id="GO:0016504">
    <property type="term" value="F:peptidase activator activity"/>
    <property type="evidence" value="ECO:0000314"/>
    <property type="project" value="MGI"/>
</dbReference>
<dbReference type="GO" id="GO:0002020">
    <property type="term" value="F:protease binding"/>
    <property type="evidence" value="ECO:0007669"/>
    <property type="project" value="Ensembl"/>
</dbReference>
<dbReference type="GO" id="GO:0043394">
    <property type="term" value="F:proteoglycan binding"/>
    <property type="evidence" value="ECO:0000266"/>
    <property type="project" value="MGI"/>
</dbReference>
<dbReference type="GO" id="GO:0048018">
    <property type="term" value="F:receptor ligand activity"/>
    <property type="evidence" value="ECO:0000314"/>
    <property type="project" value="UniProt"/>
</dbReference>
<dbReference type="GO" id="GO:0005102">
    <property type="term" value="F:signaling receptor binding"/>
    <property type="evidence" value="ECO:0000314"/>
    <property type="project" value="UniProtKB"/>
</dbReference>
<dbReference type="GO" id="GO:0006953">
    <property type="term" value="P:acute-phase response"/>
    <property type="evidence" value="ECO:0007669"/>
    <property type="project" value="UniProtKB-KW"/>
</dbReference>
<dbReference type="GO" id="GO:0001525">
    <property type="term" value="P:angiogenesis"/>
    <property type="evidence" value="ECO:0007669"/>
    <property type="project" value="UniProtKB-KW"/>
</dbReference>
<dbReference type="GO" id="GO:0051702">
    <property type="term" value="P:biological process involved in interaction with symbiont"/>
    <property type="evidence" value="ECO:0007669"/>
    <property type="project" value="Ensembl"/>
</dbReference>
<dbReference type="GO" id="GO:0007161">
    <property type="term" value="P:calcium-independent cell-matrix adhesion"/>
    <property type="evidence" value="ECO:0000314"/>
    <property type="project" value="MGI"/>
</dbReference>
<dbReference type="GO" id="GO:0007155">
    <property type="term" value="P:cell adhesion"/>
    <property type="evidence" value="ECO:0000314"/>
    <property type="project" value="MGI"/>
</dbReference>
<dbReference type="GO" id="GO:0007160">
    <property type="term" value="P:cell-matrix adhesion"/>
    <property type="evidence" value="ECO:0000314"/>
    <property type="project" value="MGI"/>
</dbReference>
<dbReference type="GO" id="GO:0007044">
    <property type="term" value="P:cell-substrate junction assembly"/>
    <property type="evidence" value="ECO:0000314"/>
    <property type="project" value="MGI"/>
</dbReference>
<dbReference type="GO" id="GO:0035987">
    <property type="term" value="P:endodermal cell differentiation"/>
    <property type="evidence" value="ECO:0007669"/>
    <property type="project" value="Ensembl"/>
</dbReference>
<dbReference type="GO" id="GO:0043542">
    <property type="term" value="P:endothelial cell migration"/>
    <property type="evidence" value="ECO:0007669"/>
    <property type="project" value="Ensembl"/>
</dbReference>
<dbReference type="GO" id="GO:0033622">
    <property type="term" value="P:integrin activation"/>
    <property type="evidence" value="ECO:0007669"/>
    <property type="project" value="Ensembl"/>
</dbReference>
<dbReference type="GO" id="GO:0007229">
    <property type="term" value="P:integrin-mediated signaling pathway"/>
    <property type="evidence" value="ECO:0007669"/>
    <property type="project" value="Ensembl"/>
</dbReference>
<dbReference type="GO" id="GO:0150102">
    <property type="term" value="P:negative regulation of monocyte activation"/>
    <property type="evidence" value="ECO:0000314"/>
    <property type="project" value="UniProtKB"/>
</dbReference>
<dbReference type="GO" id="GO:0071635">
    <property type="term" value="P:negative regulation of transforming growth factor beta production"/>
    <property type="evidence" value="ECO:0007669"/>
    <property type="project" value="Ensembl"/>
</dbReference>
<dbReference type="GO" id="GO:1901166">
    <property type="term" value="P:neural crest cell migration involved in autonomic nervous system development"/>
    <property type="evidence" value="ECO:0000266"/>
    <property type="project" value="MGI"/>
</dbReference>
<dbReference type="GO" id="GO:0045773">
    <property type="term" value="P:positive regulation of axon extension"/>
    <property type="evidence" value="ECO:0000314"/>
    <property type="project" value="MGI"/>
</dbReference>
<dbReference type="GO" id="GO:0048146">
    <property type="term" value="P:positive regulation of fibroblast proliferation"/>
    <property type="evidence" value="ECO:0007669"/>
    <property type="project" value="Ensembl"/>
</dbReference>
<dbReference type="GO" id="GO:0010628">
    <property type="term" value="P:positive regulation of gene expression"/>
    <property type="evidence" value="ECO:0007669"/>
    <property type="project" value="Ensembl"/>
</dbReference>
<dbReference type="GO" id="GO:0051897">
    <property type="term" value="P:positive regulation of phosphatidylinositol 3-kinase/protein kinase B signal transduction"/>
    <property type="evidence" value="ECO:0007669"/>
    <property type="project" value="Ensembl"/>
</dbReference>
<dbReference type="GO" id="GO:1904237">
    <property type="term" value="P:positive regulation of substrate-dependent cell migration, cell attachment to substrate"/>
    <property type="evidence" value="ECO:0007669"/>
    <property type="project" value="Ensembl"/>
</dbReference>
<dbReference type="GO" id="GO:0008360">
    <property type="term" value="P:regulation of cell shape"/>
    <property type="evidence" value="ECO:0007669"/>
    <property type="project" value="UniProtKB-KW"/>
</dbReference>
<dbReference type="GO" id="GO:0070372">
    <property type="term" value="P:regulation of ERK1 and ERK2 cascade"/>
    <property type="evidence" value="ECO:0007669"/>
    <property type="project" value="Ensembl"/>
</dbReference>
<dbReference type="GO" id="GO:0014850">
    <property type="term" value="P:response to muscle activity"/>
    <property type="evidence" value="ECO:0000314"/>
    <property type="project" value="UniProt"/>
</dbReference>
<dbReference type="GO" id="GO:0034446">
    <property type="term" value="P:substrate adhesion-dependent cell spreading"/>
    <property type="evidence" value="ECO:0007669"/>
    <property type="project" value="Ensembl"/>
</dbReference>
<dbReference type="GO" id="GO:0042060">
    <property type="term" value="P:wound healing"/>
    <property type="evidence" value="ECO:0000315"/>
    <property type="project" value="MGI"/>
</dbReference>
<dbReference type="CDD" id="cd00061">
    <property type="entry name" value="FN1"/>
    <property type="match status" value="12"/>
</dbReference>
<dbReference type="CDD" id="cd00062">
    <property type="entry name" value="FN2"/>
    <property type="match status" value="2"/>
</dbReference>
<dbReference type="CDD" id="cd00063">
    <property type="entry name" value="FN3"/>
    <property type="match status" value="17"/>
</dbReference>
<dbReference type="FunFam" id="2.10.70.10:FF:000004">
    <property type="entry name" value="Fibronectin 1"/>
    <property type="match status" value="1"/>
</dbReference>
<dbReference type="FunFam" id="2.10.70.10:FF:000006">
    <property type="entry name" value="Fibronectin 1"/>
    <property type="match status" value="3"/>
</dbReference>
<dbReference type="FunFam" id="2.10.70.10:FF:000007">
    <property type="entry name" value="Fibronectin 1"/>
    <property type="match status" value="2"/>
</dbReference>
<dbReference type="FunFam" id="2.10.70.10:FF:000018">
    <property type="entry name" value="Fibronectin 1"/>
    <property type="match status" value="1"/>
</dbReference>
<dbReference type="FunFam" id="2.60.40.10:FF:000099">
    <property type="entry name" value="Fibronectin 1"/>
    <property type="match status" value="3"/>
</dbReference>
<dbReference type="FunFam" id="2.60.40.10:FF:000417">
    <property type="entry name" value="Fibronectin 1"/>
    <property type="match status" value="1"/>
</dbReference>
<dbReference type="FunFam" id="2.60.40.10:FF:000579">
    <property type="entry name" value="Fibronectin 1"/>
    <property type="match status" value="1"/>
</dbReference>
<dbReference type="FunFam" id="2.60.40.10:FF:000622">
    <property type="entry name" value="Fibronectin 1"/>
    <property type="match status" value="1"/>
</dbReference>
<dbReference type="FunFam" id="2.60.40.10:FF:001069">
    <property type="entry name" value="Fibronectin 1"/>
    <property type="match status" value="1"/>
</dbReference>
<dbReference type="FunFam" id="2.10.10.10:FF:000001">
    <property type="entry name" value="Fibronectin 1a isoform 1"/>
    <property type="match status" value="2"/>
</dbReference>
<dbReference type="FunFam" id="2.10.70.10:FF:000017">
    <property type="entry name" value="Fibronectin isoform X1"/>
    <property type="match status" value="1"/>
</dbReference>
<dbReference type="FunFam" id="2.60.40.10:FF:000227">
    <property type="entry name" value="Fibronectin isoform X1"/>
    <property type="match status" value="1"/>
</dbReference>
<dbReference type="FunFam" id="2.10.70.10:FF:000020">
    <property type="entry name" value="fibronectin isoform X1"/>
    <property type="match status" value="1"/>
</dbReference>
<dbReference type="FunFam" id="2.10.70.10:FF:000021">
    <property type="entry name" value="fibronectin isoform X1"/>
    <property type="match status" value="1"/>
</dbReference>
<dbReference type="FunFam" id="2.10.70.10:FF:000022">
    <property type="entry name" value="fibronectin isoform X1"/>
    <property type="match status" value="1"/>
</dbReference>
<dbReference type="FunFam" id="2.60.40.10:FF:000275">
    <property type="entry name" value="fibronectin isoform X1"/>
    <property type="match status" value="1"/>
</dbReference>
<dbReference type="FunFam" id="2.60.40.10:FF:000300">
    <property type="entry name" value="fibronectin isoform X1"/>
    <property type="match status" value="1"/>
</dbReference>
<dbReference type="FunFam" id="2.60.40.10:FF:000306">
    <property type="entry name" value="fibronectin isoform X1"/>
    <property type="match status" value="1"/>
</dbReference>
<dbReference type="FunFam" id="2.60.40.10:FF:000317">
    <property type="entry name" value="fibronectin isoform X1"/>
    <property type="match status" value="1"/>
</dbReference>
<dbReference type="FunFam" id="2.60.40.10:FF:000336">
    <property type="entry name" value="fibronectin isoform X1"/>
    <property type="match status" value="1"/>
</dbReference>
<dbReference type="FunFam" id="2.60.40.10:FF:000364">
    <property type="entry name" value="fibronectin isoform X1"/>
    <property type="match status" value="1"/>
</dbReference>
<dbReference type="FunFam" id="2.60.40.10:FF:000382">
    <property type="entry name" value="fibronectin isoform X1"/>
    <property type="match status" value="1"/>
</dbReference>
<dbReference type="FunFam" id="2.60.40.10:FF:000447">
    <property type="entry name" value="fibronectin isoform X1"/>
    <property type="match status" value="1"/>
</dbReference>
<dbReference type="FunFam" id="2.60.40.10:FF:000433">
    <property type="entry name" value="fibronectin isoform X5"/>
    <property type="match status" value="1"/>
</dbReference>
<dbReference type="Gene3D" id="2.10.70.10">
    <property type="entry name" value="Complement Module, domain 1"/>
    <property type="match status" value="12"/>
</dbReference>
<dbReference type="Gene3D" id="2.10.10.10">
    <property type="entry name" value="Fibronectin, type II, collagen-binding"/>
    <property type="match status" value="2"/>
</dbReference>
<dbReference type="Gene3D" id="2.60.40.10">
    <property type="entry name" value="Immunoglobulins"/>
    <property type="match status" value="17"/>
</dbReference>
<dbReference type="InterPro" id="IPR050991">
    <property type="entry name" value="ECM_Regulatory_Proteins"/>
</dbReference>
<dbReference type="InterPro" id="IPR000083">
    <property type="entry name" value="Fibronectin_type1"/>
</dbReference>
<dbReference type="InterPro" id="IPR003961">
    <property type="entry name" value="FN3_dom"/>
</dbReference>
<dbReference type="InterPro" id="IPR036116">
    <property type="entry name" value="FN3_sf"/>
</dbReference>
<dbReference type="InterPro" id="IPR000562">
    <property type="entry name" value="FN_type2_dom"/>
</dbReference>
<dbReference type="InterPro" id="IPR036943">
    <property type="entry name" value="FN_type2_sf"/>
</dbReference>
<dbReference type="InterPro" id="IPR013783">
    <property type="entry name" value="Ig-like_fold"/>
</dbReference>
<dbReference type="InterPro" id="IPR013806">
    <property type="entry name" value="Kringle-like"/>
</dbReference>
<dbReference type="PANTHER" id="PTHR46708:SF8">
    <property type="entry name" value="FIBRONECTIN"/>
    <property type="match status" value="1"/>
</dbReference>
<dbReference type="PANTHER" id="PTHR46708">
    <property type="entry name" value="TENASCIN"/>
    <property type="match status" value="1"/>
</dbReference>
<dbReference type="Pfam" id="PF00039">
    <property type="entry name" value="fn1"/>
    <property type="match status" value="11"/>
</dbReference>
<dbReference type="Pfam" id="PF00040">
    <property type="entry name" value="fn2"/>
    <property type="match status" value="2"/>
</dbReference>
<dbReference type="Pfam" id="PF00041">
    <property type="entry name" value="fn3"/>
    <property type="match status" value="17"/>
</dbReference>
<dbReference type="PRINTS" id="PR00013">
    <property type="entry name" value="FNTYPEII"/>
</dbReference>
<dbReference type="SMART" id="SM00058">
    <property type="entry name" value="FN1"/>
    <property type="match status" value="12"/>
</dbReference>
<dbReference type="SMART" id="SM00059">
    <property type="entry name" value="FN2"/>
    <property type="match status" value="2"/>
</dbReference>
<dbReference type="SMART" id="SM00060">
    <property type="entry name" value="FN3"/>
    <property type="match status" value="17"/>
</dbReference>
<dbReference type="SUPFAM" id="SSF49265">
    <property type="entry name" value="Fibronectin type III"/>
    <property type="match status" value="11"/>
</dbReference>
<dbReference type="SUPFAM" id="SSF57603">
    <property type="entry name" value="FnI-like domain"/>
    <property type="match status" value="12"/>
</dbReference>
<dbReference type="SUPFAM" id="SSF57440">
    <property type="entry name" value="Kringle-like"/>
    <property type="match status" value="2"/>
</dbReference>
<dbReference type="PROSITE" id="PS00022">
    <property type="entry name" value="EGF_1"/>
    <property type="match status" value="2"/>
</dbReference>
<dbReference type="PROSITE" id="PS01253">
    <property type="entry name" value="FN1_1"/>
    <property type="match status" value="12"/>
</dbReference>
<dbReference type="PROSITE" id="PS51091">
    <property type="entry name" value="FN1_2"/>
    <property type="match status" value="12"/>
</dbReference>
<dbReference type="PROSITE" id="PS00023">
    <property type="entry name" value="FN2_1"/>
    <property type="match status" value="2"/>
</dbReference>
<dbReference type="PROSITE" id="PS51092">
    <property type="entry name" value="FN2_2"/>
    <property type="match status" value="2"/>
</dbReference>
<dbReference type="PROSITE" id="PS50853">
    <property type="entry name" value="FN3"/>
    <property type="match status" value="17"/>
</dbReference>
<gene>
    <name evidence="21" type="primary">Fn1</name>
</gene>
<comment type="function">
    <text evidence="2 13 16">Fibronectins bind cell surfaces and various compounds including collagen, fibrin, heparin, DNA, and actin (By similarity). Fibronectins are involved in cell adhesion, cell motility, opsonization, wound healing, and maintenance of cell shape healing, and maintenance of cell shape (By similarity). Involved in osteoblast compaction through the fibronectin fibrillogenesis cell-mediated matrix assembly process, essential for osteoblast mineralization (PubMed:21768292). Participates in the regulation of type I collagen deposition by osteoblasts (PubMed:21768292). Acts as a ligand for the Lilrb4a receptor, inhibiting Fcgr1/CD64-mediated monocyte activation (PubMed:34089617).</text>
</comment>
<comment type="function">
    <text evidence="18">Secreted by contracting muscle, induces liver autophagy, a degradative pathway for nutrient mobilization and damage removal, and systemic insulin sensitization via hepatic ITGA5:ITGB1 integrin receptor signaling.</text>
</comment>
<comment type="function">
    <molecule>Anastellin</molecule>
    <text evidence="2">Binds fibronectin and induces fibril formation. This fibronectin polymer, named superfibronectin, exhibits enhanced adhesive properties. Both anastellin and superfibronectin inhibit tumor growth, angiogenesis and metastasis. Anastellin activates p38 MAPK and inhibits lysophospholipid signaling.</text>
</comment>
<comment type="subunit">
    <text evidence="1 2 17">Mostly heterodimers or multimers of alternatively spliced variants, connected by 2 disulfide bonds near the carboxyl ends; to a lesser extent homodimers. Interacts with FBLN1, AMBP, TNR, LGALS3BP and COL13A1. Interacts with FBLN7 (By similarity). Interacts with COMP. Interacts (via type III repeats 9-14) with TNFAIP6 (via CUB domain); this interaction enhances fibronectin fibril assembly. TNFAIP6 may act as a bridging molecule between FN1 and THBS1 (By similarity). Interacts with TNR; the interaction inhibits cell adhesion and neurite outgrowth (By similarity). Interacts with FST3 and MYOC (By similarity). Interacts with SVEP1 (PubMed:36792666).</text>
</comment>
<comment type="interaction">
    <interactant intactId="EBI-641955">
        <id>P11276</id>
    </interactant>
    <interactant intactId="EBI-617954">
        <id>Q8CIH5</id>
        <label>Plcg2</label>
    </interactant>
    <organismsDiffer>false</organismsDiffer>
    <experiments>6</experiments>
</comment>
<comment type="subcellular location">
    <subcellularLocation>
        <location evidence="20">Secreted</location>
        <location evidence="20">Extracellular space</location>
        <location evidence="20">Extracellular matrix</location>
    </subcellularLocation>
    <subcellularLocation>
        <location evidence="18">Secreted</location>
    </subcellularLocation>
</comment>
<comment type="alternative products">
    <event type="alternative splicing"/>
    <isoform>
        <id>P11276-1</id>
        <name>1</name>
        <sequence type="displayed"/>
    </isoform>
    <text evidence="20">A number of isoforms are produced. The diversity of isoforms depends on the V region and either of the two extra domain which can be either included or excluded (partially or completely for the V region).</text>
</comment>
<comment type="tissue specificity">
    <text evidence="15">Expressed in the inner limiting membrane and around blood vessels in the retina (at protein level) (PubMed:29777959). Plasma FN (soluble dimeric form) is secreted by hepatocytes. Cellular FN (dimeric or cross-linked multimeric forms), made by fibroblasts, epithelial and other cell types, is deposited as fibrils in the extracellular matrix.</text>
</comment>
<comment type="induction">
    <text>Glucocorticoids suppressed mRNA expression and protein synthesis.</text>
</comment>
<comment type="PTM">
    <text evidence="2">Sulfated.</text>
</comment>
<comment type="PTM">
    <text evidence="19">Forms covalent cross-links mediated by a transglutaminase, such as F13A or TGM2, between a glutamine and the epsilon-amino group of a lysine residue, forming homopolymers and heteropolymers (e.g. fibrinogen-fibronectin, collagen-fibronectin heteropolymers).</text>
</comment>
<comment type="PTM">
    <text evidence="2">Phosphorylated by FAM20C in the extracellular medium.</text>
</comment>
<comment type="PTM">
    <text evidence="2">Proteolytic processing produces the C-terminal NC1 peptide, anastellin.</text>
</comment>
<comment type="PTM">
    <text evidence="14">Some lysine residues are oxidized to allysine by LOXL3, promoting fibronectin activation and matrix formation.</text>
</comment>
<comment type="PTM">
    <text evidence="3">Serotonylated on Gln residues by TGM2 in response to hypoxia.</text>
</comment>
<comment type="disruption phenotype">
    <text evidence="18">Muscle-specific mutant mice show comparable body weight, glucose tolerance test (GTT) and insulin tolerance test (ITT) with control mice. After high fat diet (HFD) feeding and exercise training, control and mutant mice have a similar body weight and liver and muscle tissue weight but daily exercise training improves GTT and ITT values in HFD-fed control mice but not in HFD-fed mutants.</text>
</comment>
<accession>P11276</accession>
<accession>G5E8B8</accession>
<accession>Q61567</accession>
<accession>Q61568</accession>
<accession>Q61569</accession>
<accession>Q64233</accession>
<accession>Q80UI4</accession>
<organism>
    <name type="scientific">Mus musculus</name>
    <name type="common">Mouse</name>
    <dbReference type="NCBI Taxonomy" id="10090"/>
    <lineage>
        <taxon>Eukaryota</taxon>
        <taxon>Metazoa</taxon>
        <taxon>Chordata</taxon>
        <taxon>Craniata</taxon>
        <taxon>Vertebrata</taxon>
        <taxon>Euteleostomi</taxon>
        <taxon>Mammalia</taxon>
        <taxon>Eutheria</taxon>
        <taxon>Euarchontoglires</taxon>
        <taxon>Glires</taxon>
        <taxon>Rodentia</taxon>
        <taxon>Myomorpha</taxon>
        <taxon>Muroidea</taxon>
        <taxon>Muridae</taxon>
        <taxon>Murinae</taxon>
        <taxon>Mus</taxon>
        <taxon>Mus</taxon>
    </lineage>
</organism>
<reference key="1">
    <citation type="journal article" date="2009" name="PLoS Biol.">
        <title>Lineage-specific biology revealed by a finished genome assembly of the mouse.</title>
        <authorList>
            <person name="Church D.M."/>
            <person name="Goodstadt L."/>
            <person name="Hillier L.W."/>
            <person name="Zody M.C."/>
            <person name="Goldstein S."/>
            <person name="She X."/>
            <person name="Bult C.J."/>
            <person name="Agarwala R."/>
            <person name="Cherry J.L."/>
            <person name="DiCuccio M."/>
            <person name="Hlavina W."/>
            <person name="Kapustin Y."/>
            <person name="Meric P."/>
            <person name="Maglott D."/>
            <person name="Birtle Z."/>
            <person name="Marques A.C."/>
            <person name="Graves T."/>
            <person name="Zhou S."/>
            <person name="Teague B."/>
            <person name="Potamousis K."/>
            <person name="Churas C."/>
            <person name="Place M."/>
            <person name="Herschleb J."/>
            <person name="Runnheim R."/>
            <person name="Forrest D."/>
            <person name="Amos-Landgraf J."/>
            <person name="Schwartz D.C."/>
            <person name="Cheng Z."/>
            <person name="Lindblad-Toh K."/>
            <person name="Eichler E.E."/>
            <person name="Ponting C.P."/>
        </authorList>
    </citation>
    <scope>NUCLEOTIDE SEQUENCE [LARGE SCALE GENOMIC DNA]</scope>
    <source>
        <strain>C57BL/6J</strain>
    </source>
</reference>
<reference key="2">
    <citation type="submission" date="2005-07" db="EMBL/GenBank/DDBJ databases">
        <authorList>
            <person name="Mural R.J."/>
            <person name="Adams M.D."/>
            <person name="Myers E.W."/>
            <person name="Smith H.O."/>
            <person name="Venter J.C."/>
        </authorList>
    </citation>
    <scope>NUCLEOTIDE SEQUENCE [LARGE SCALE GENOMIC DNA]</scope>
</reference>
<reference key="3">
    <citation type="journal article" date="2004" name="Genome Res.">
        <title>The status, quality, and expansion of the NIH full-length cDNA project: the Mammalian Gene Collection (MGC).</title>
        <authorList>
            <consortium name="The MGC Project Team"/>
        </authorList>
    </citation>
    <scope>NUCLEOTIDE SEQUENCE [LARGE SCALE MRNA] OF 1-920</scope>
    <source>
        <strain>FVB/N-3</strain>
        <tissue>Mammary tumor</tissue>
    </source>
</reference>
<reference key="4">
    <citation type="journal article" date="1993" name="Gene">
        <title>Sequence of the mouse fibronectin-encoding gene promoter region.</title>
        <authorList>
            <person name="Polly P."/>
            <person name="Nicholson R.C."/>
        </authorList>
    </citation>
    <scope>NUCLEOTIDE SEQUENCE [GENOMIC DNA] OF 1-28</scope>
    <source>
        <tissue>Liver</tissue>
    </source>
</reference>
<reference key="5">
    <citation type="journal article" date="1995" name="J. Cell Sci.">
        <title>Regulation of mesenchymal extracellular matrix protein synthesis by transforming growth factor-beta and glucocorticoids in tumor stroma.</title>
        <authorList>
            <person name="Talts J.F."/>
            <person name="Weller A."/>
            <person name="Timpl R."/>
            <person name="Ekblom M."/>
            <person name="Ekblom P."/>
        </authorList>
    </citation>
    <scope>NUCLEOTIDE SEQUENCE [MRNA] OF 562-834</scope>
    <source>
        <strain>NMRI</strain>
    </source>
</reference>
<reference key="6">
    <citation type="submission" date="1995-12" db="EMBL/GenBank/DDBJ databases">
        <authorList>
            <person name="Gorski G."/>
            <person name="Aros M."/>
            <person name="Norton P."/>
        </authorList>
    </citation>
    <scope>NUCLEOTIDE SEQUENCE [MRNA] OF 899-2376</scope>
</reference>
<reference key="7">
    <citation type="journal article" date="1988" name="Proc. Natl. Acad. Sci. U.S.A.">
        <title>Induction of fibronectin gene transcription and mRNA is a primary response to growth-factor stimulation of AKR-2B cells.</title>
        <authorList>
            <person name="Blatti S.P."/>
            <person name="Foster D.N."/>
            <person name="Ranganthan G."/>
            <person name="Moses H.L."/>
            <person name="Getz M.J."/>
        </authorList>
    </citation>
    <scope>NUCLEOTIDE SEQUENCE [MRNA] OF 2375-2477</scope>
</reference>
<reference key="8">
    <citation type="journal article" date="1989" name="Exp. Cell Res.">
        <title>Coordinate induction of fibronectin, fibronectin receptor, tropomyosin, and actin genes in serum-stimulated fibroblasts.</title>
        <authorList>
            <person name="Ryseck R.P."/>
            <person name="MacDonald-Bravo H."/>
            <person name="Zerial M."/>
            <person name="Bravo R."/>
        </authorList>
    </citation>
    <scope>NUCLEOTIDE SEQUENCE [MRNA] OF 2375-2477</scope>
</reference>
<reference key="9">
    <citation type="journal article" date="1992" name="Exp. Cell Res.">
        <title>Fibronectin gene expression in proliferating, quiescent, and SV40-infected mouse kidney cells.</title>
        <authorList>
            <person name="Khandjian E.W."/>
            <person name="Salomon C."/>
            <person name="Leonard N."/>
            <person name="Tremblay S."/>
            <person name="Turler H."/>
        </authorList>
    </citation>
    <scope>NUCLEOTIDE SEQUENCE [MRNA] OF 2375-2477</scope>
    <source>
        <tissue>Kidney</tissue>
    </source>
</reference>
<reference key="10">
    <citation type="journal article" date="1997" name="J. Biol. Chem.">
        <title>Covalent cross-linking of fibronectin to fibrin is required for maximal cell adhesion to a fibronectin-fibrin matrix.</title>
        <authorList>
            <person name="Corbett S.A."/>
            <person name="Lee L."/>
            <person name="Wilson C.L."/>
            <person name="Schwarzbauer J.E."/>
        </authorList>
    </citation>
    <scope>TRANSGLUTAMINATION AT GLN-35; GLN-36 AND GLN-48</scope>
    <scope>MUTAGENESIS OF GLN-35; GLN-36 AND GLN-48</scope>
</reference>
<reference key="11">
    <citation type="journal article" date="2001" name="Eur. J. Haematol.">
        <title>Glucocorticoids down-regulate the extracellular matrix proteins fibronectin, fibulin-1 and fibulin-2 in bone marrow stroma.</title>
        <authorList>
            <person name="Gu Y.-C."/>
            <person name="Talts J.F."/>
            <person name="Gullberg D."/>
            <person name="Timpl R."/>
            <person name="Ekblom M."/>
        </authorList>
    </citation>
    <scope>DOWN-REGULATION BY GLUCOCORTICOIDS</scope>
</reference>
<reference key="12">
    <citation type="journal article" date="2006" name="J. Proteome Res.">
        <title>Proteome-wide characterization of N-glycosylation events by diagonal chromatography.</title>
        <authorList>
            <person name="Ghesquiere B."/>
            <person name="Van Damme J."/>
            <person name="Martens L."/>
            <person name="Vandekerckhove J."/>
            <person name="Gevaert K."/>
        </authorList>
    </citation>
    <scope>GLYCOSYLATION [LARGE SCALE ANALYSIS] AT ASN-1006</scope>
    <source>
        <strain>C57BL/6J</strain>
        <tissue>Plasma</tissue>
    </source>
</reference>
<reference key="13">
    <citation type="journal article" date="2007" name="J. Biol. Chem.">
        <title>TM14 is a new member of the fibulin family (fibulin-7) that interacts with extracellular matrix molecules and is active for cell binding.</title>
        <authorList>
            <person name="de Vega S."/>
            <person name="Iwamoto T."/>
            <person name="Nakamura T."/>
            <person name="Hozumi K."/>
            <person name="McKnight D.A."/>
            <person name="Fisher L.W."/>
            <person name="Fukumoto S."/>
            <person name="Yamada Y."/>
        </authorList>
    </citation>
    <scope>INTERACTION WITH FBLN7</scope>
</reference>
<reference key="14">
    <citation type="journal article" date="2007" name="J. Proteome Res.">
        <title>Enhanced analysis of the mouse plasma proteome using cysteine-containing tryptic glycopeptides.</title>
        <authorList>
            <person name="Bernhard O.K."/>
            <person name="Kapp E.A."/>
            <person name="Simpson R.J."/>
        </authorList>
    </citation>
    <scope>GLYCOSYLATION [LARGE SCALE ANALYSIS] AT ASN-528</scope>
    <source>
        <strain>C57BL/6J</strain>
        <tissue>Plasma</tissue>
    </source>
</reference>
<reference key="15">
    <citation type="journal article" date="2007" name="Proc. Natl. Acad. Sci. U.S.A.">
        <title>Large-scale phosphorylation analysis of mouse liver.</title>
        <authorList>
            <person name="Villen J."/>
            <person name="Beausoleil S.A."/>
            <person name="Gerber S.A."/>
            <person name="Gygi S.P."/>
        </authorList>
    </citation>
    <scope>PHOSPHORYLATION [LARGE SCALE ANALYSIS] AT SER-2475</scope>
    <scope>IDENTIFICATION BY MASS SPECTROMETRY [LARGE SCALE ANALYSIS]</scope>
    <source>
        <tissue>Liver</tissue>
    </source>
</reference>
<reference key="16">
    <citation type="journal article" date="2008" name="J. Proteome Res.">
        <title>Specific phosphopeptide enrichment with immobilized titanium ion affinity chromatography adsorbent for phosphoproteome analysis.</title>
        <authorList>
            <person name="Zhou H."/>
            <person name="Ye M."/>
            <person name="Dong J."/>
            <person name="Han G."/>
            <person name="Jiang X."/>
            <person name="Wu R."/>
            <person name="Zou H."/>
        </authorList>
    </citation>
    <scope>PHOSPHORYLATION [LARGE SCALE ANALYSIS] AT SER-2475</scope>
    <scope>IDENTIFICATION BY MASS SPECTROMETRY [LARGE SCALE ANALYSIS]</scope>
    <source>
        <tissue>Liver</tissue>
    </source>
</reference>
<reference key="17">
    <citation type="journal article" date="2009" name="Mol. Cell. Proteomics">
        <title>The mouse C2C12 myoblast cell surface N-linked glycoproteome: identification, glycosite occupancy, and membrane orientation.</title>
        <authorList>
            <person name="Gundry R.L."/>
            <person name="Raginski K."/>
            <person name="Tarasova Y."/>
            <person name="Tchernyshyov I."/>
            <person name="Bausch-Fluck D."/>
            <person name="Elliott S.T."/>
            <person name="Boheler K.R."/>
            <person name="Van Eyk J.E."/>
            <person name="Wollscheid B."/>
        </authorList>
    </citation>
    <scope>GLYCOSYLATION [LARGE SCALE ANALYSIS] AT ASN-528; ASN-1006; ASN-1290 AND ASN-2198</scope>
    <source>
        <tissue>Myoblast</tissue>
    </source>
</reference>
<reference key="18">
    <citation type="journal article" date="2009" name="Mol. Cell. Proteomics">
        <title>Large scale localization of protein phosphorylation by use of electron capture dissociation mass spectrometry.</title>
        <authorList>
            <person name="Sweet S.M."/>
            <person name="Bailey C.M."/>
            <person name="Cunningham D.L."/>
            <person name="Heath J.K."/>
            <person name="Cooper H.J."/>
        </authorList>
    </citation>
    <scope>PHOSPHORYLATION [LARGE SCALE ANALYSIS] AT SER-2475</scope>
    <scope>IDENTIFICATION BY MASS SPECTROMETRY [LARGE SCALE ANALYSIS]</scope>
    <source>
        <tissue>Embryonic fibroblast</tissue>
    </source>
</reference>
<reference key="19">
    <citation type="journal article" date="2009" name="Nat. Biotechnol.">
        <title>Mass-spectrometric identification and relative quantification of N-linked cell surface glycoproteins.</title>
        <authorList>
            <person name="Wollscheid B."/>
            <person name="Bausch-Fluck D."/>
            <person name="Henderson C."/>
            <person name="O'Brien R."/>
            <person name="Bibel M."/>
            <person name="Schiess R."/>
            <person name="Aebersold R."/>
            <person name="Watts J.D."/>
        </authorList>
    </citation>
    <scope>GLYCOSYLATION [LARGE SCALE ANALYSIS] AT ASN-1006 AND ASN-1290</scope>
</reference>
<reference key="20">
    <citation type="journal article" date="2010" name="Cell">
        <title>A tissue-specific atlas of mouse protein phosphorylation and expression.</title>
        <authorList>
            <person name="Huttlin E.L."/>
            <person name="Jedrychowski M.P."/>
            <person name="Elias J.E."/>
            <person name="Goswami T."/>
            <person name="Rad R."/>
            <person name="Beausoleil S.A."/>
            <person name="Villen J."/>
            <person name="Haas W."/>
            <person name="Sowa M.E."/>
            <person name="Gygi S.P."/>
        </authorList>
    </citation>
    <scope>PHOSPHORYLATION [LARGE SCALE ANALYSIS] AT SER-285 AND SER-2475</scope>
    <scope>IDENTIFICATION BY MASS SPECTROMETRY [LARGE SCALE ANALYSIS]</scope>
    <source>
        <tissue>Brain</tissue>
        <tissue>Brown adipose tissue</tissue>
        <tissue>Heart</tissue>
        <tissue>Kidney</tissue>
        <tissue>Liver</tissue>
        <tissue>Lung</tissue>
        <tissue>Pancreas</tissue>
        <tissue>Spleen</tissue>
        <tissue>Testis</tissue>
    </source>
</reference>
<reference key="21">
    <citation type="journal article" date="2011" name="J. Cell Biol.">
        <title>Osteoblast mineralization requires beta1 integrin/ICAP-1-dependent fibronectin deposition.</title>
        <authorList>
            <person name="Brunner M."/>
            <person name="Millon-Fremillon A."/>
            <person name="Chevalier G."/>
            <person name="Nakchbandi I.A."/>
            <person name="Mosher D."/>
            <person name="Block M.R."/>
            <person name="Albiges-Rizo C."/>
            <person name="Bouvard D."/>
        </authorList>
    </citation>
    <scope>FUNCTION</scope>
</reference>
<reference key="22">
    <citation type="journal article" date="2016" name="Dev. Cell">
        <title>Localized LoxL3-dependent fibronectin oxidation regulates myofiber stretch and integrin-mediated adhesion.</title>
        <authorList>
            <person name="Kraft-Sheleg O."/>
            <person name="Zaffryar-Eilot S."/>
            <person name="Genin O."/>
            <person name="Yaseen W."/>
            <person name="Soueid-Baumgarten S."/>
            <person name="Kessler O."/>
            <person name="Smolkin T."/>
            <person name="Akiri G."/>
            <person name="Neufeld G."/>
            <person name="Cinnamon Y."/>
            <person name="Hasson P."/>
        </authorList>
    </citation>
    <scope>OXIDATION</scope>
</reference>
<reference key="23">
    <citation type="journal article" date="2018" name="Acta Biomater.">
        <title>Extracellular matrix component expression in human pluripotent stem cell-derived retinal organoids recapitulates retinogenesis in vivo and reveals an important role for IMPG1 and CD44 in the development of photoreceptors and interphotoreceptor matrix.</title>
        <authorList>
            <person name="Felemban M."/>
            <person name="Dorgau B."/>
            <person name="Hunt N.C."/>
            <person name="Hallam D."/>
            <person name="Zerti D."/>
            <person name="Bauer R."/>
            <person name="Ding Y."/>
            <person name="Collin J."/>
            <person name="Steel D."/>
            <person name="Krasnogor N."/>
            <person name="Al-Aama J."/>
            <person name="Lindsay S."/>
            <person name="Mellough C."/>
            <person name="Lako M."/>
        </authorList>
    </citation>
    <scope>TISSUE SPECIFICITY</scope>
</reference>
<reference key="24">
    <citation type="journal article" date="2021" name="Int. Immunol.">
        <title>Blockade of checkpoint ILT3/LILRB4/gp49B binding to fibronectin ameliorates autoimmune disease in BXSB/Yaa mice.</title>
        <authorList>
            <person name="Su M.T."/>
            <person name="Inui M."/>
            <person name="Wong Y.L."/>
            <person name="Takahashi M."/>
            <person name="Sugahara-Tobinai A."/>
            <person name="Ono K."/>
            <person name="Miyamoto S."/>
            <person name="Murakami K."/>
            <person name="Itoh-Nakadai A."/>
            <person name="Kezuka D."/>
            <person name="Itoi S."/>
            <person name="Endo S."/>
            <person name="Hirayasu K."/>
            <person name="Arase H."/>
            <person name="Takai T."/>
        </authorList>
    </citation>
    <scope>FUNCTION</scope>
</reference>
<reference key="25">
    <citation type="journal article" date="2023" name="Cell Metab.">
        <title>Exercise-activated hepatic autophagy via the FN1-alpha5beta1 integrin pathway drives metabolic benefits of exercise.</title>
        <authorList>
            <person name="Kuramoto K."/>
            <person name="Liang H."/>
            <person name="Hong J.H."/>
            <person name="He C."/>
        </authorList>
    </citation>
    <scope>FUNCTION</scope>
    <scope>SUBCELLULAR LOCATION</scope>
    <scope>DISRUPTION PHENOTYPE</scope>
</reference>
<reference key="26">
    <citation type="journal article" date="2023" name="Nat. Commun.">
        <title>SVEP1 is an endogenous ligand for the orphan receptor PEAR1.</title>
        <authorList>
            <person name="Elenbaas J.S."/>
            <person name="Pudupakkam U."/>
            <person name="Ashworth K.J."/>
            <person name="Kang C.J."/>
            <person name="Patel V."/>
            <person name="Santana K."/>
            <person name="Jung I.H."/>
            <person name="Lee P.C."/>
            <person name="Burks K.H."/>
            <person name="Amrute J.M."/>
            <person name="Mecham R.P."/>
            <person name="Halabi C.M."/>
            <person name="Alisio A."/>
            <person name="Di Paola J."/>
            <person name="Stitziel N.O."/>
        </authorList>
    </citation>
    <scope>INTERACTION WITH SVEP1</scope>
</reference>
<reference key="27">
    <citation type="journal article" date="1998" name="J. Mol. Biol.">
        <title>Solution structure and dynamics of linked cell attachment modules of mouse fibronectin containing the RGD and synergy regions: comparison with the human fibronectin crystal structure.</title>
        <authorList>
            <person name="Copie V."/>
            <person name="Tomita Y."/>
            <person name="Akiyama S.K."/>
            <person name="Aota S."/>
            <person name="Yamada K.M."/>
            <person name="Venable R.M."/>
            <person name="Pastor R.W."/>
            <person name="Krueger S."/>
            <person name="Torchia D.A."/>
        </authorList>
    </citation>
    <scope>STRUCTURE BY NMR OF 1447-1630</scope>
</reference>
<protein>
    <recommendedName>
        <fullName evidence="20">Fibronectin</fullName>
        <shortName>FN</shortName>
    </recommendedName>
    <component>
        <recommendedName>
            <fullName>Anastellin</fullName>
        </recommendedName>
    </component>
</protein>
<keyword id="KW-0002">3D-structure</keyword>
<keyword id="KW-0011">Acute phase</keyword>
<keyword id="KW-0025">Alternative splicing</keyword>
<keyword id="KW-0037">Angiogenesis</keyword>
<keyword id="KW-0130">Cell adhesion</keyword>
<keyword id="KW-0133">Cell shape</keyword>
<keyword id="KW-1015">Disulfide bond</keyword>
<keyword id="KW-0272">Extracellular matrix</keyword>
<keyword id="KW-0325">Glycoprotein</keyword>
<keyword id="KW-0358">Heparin-binding</keyword>
<keyword id="KW-1017">Isopeptide bond</keyword>
<keyword id="KW-0558">Oxidation</keyword>
<keyword id="KW-0597">Phosphoprotein</keyword>
<keyword id="KW-0873">Pyrrolidone carboxylic acid</keyword>
<keyword id="KW-1185">Reference proteome</keyword>
<keyword id="KW-0677">Repeat</keyword>
<keyword id="KW-0964">Secreted</keyword>
<keyword id="KW-0732">Signal</keyword>
<keyword id="KW-0765">Sulfation</keyword>
<proteinExistence type="evidence at protein level"/>
<evidence type="ECO:0000250" key="1"/>
<evidence type="ECO:0000250" key="2">
    <source>
        <dbReference type="UniProtKB" id="P02751"/>
    </source>
</evidence>
<evidence type="ECO:0000250" key="3">
    <source>
        <dbReference type="UniProtKB" id="P07589"/>
    </source>
</evidence>
<evidence type="ECO:0000255" key="4"/>
<evidence type="ECO:0000255" key="5">
    <source>
        <dbReference type="PROSITE-ProRule" id="PRU00316"/>
    </source>
</evidence>
<evidence type="ECO:0000255" key="6">
    <source>
        <dbReference type="PROSITE-ProRule" id="PRU00478"/>
    </source>
</evidence>
<evidence type="ECO:0000255" key="7">
    <source>
        <dbReference type="PROSITE-ProRule" id="PRU00479"/>
    </source>
</evidence>
<evidence type="ECO:0000256" key="8">
    <source>
        <dbReference type="SAM" id="MobiDB-lite"/>
    </source>
</evidence>
<evidence type="ECO:0000269" key="9">
    <source>
    </source>
</evidence>
<evidence type="ECO:0000269" key="10">
    <source>
    </source>
</evidence>
<evidence type="ECO:0000269" key="11">
    <source>
    </source>
</evidence>
<evidence type="ECO:0000269" key="12">
    <source>
    </source>
</evidence>
<evidence type="ECO:0000269" key="13">
    <source>
    </source>
</evidence>
<evidence type="ECO:0000269" key="14">
    <source>
    </source>
</evidence>
<evidence type="ECO:0000269" key="15">
    <source>
    </source>
</evidence>
<evidence type="ECO:0000269" key="16">
    <source>
    </source>
</evidence>
<evidence type="ECO:0000269" key="17">
    <source>
    </source>
</evidence>
<evidence type="ECO:0000269" key="18">
    <source>
    </source>
</evidence>
<evidence type="ECO:0000269" key="19">
    <source>
    </source>
</evidence>
<evidence type="ECO:0000305" key="20"/>
<evidence type="ECO:0000312" key="21">
    <source>
        <dbReference type="MGI" id="MGI:95566"/>
    </source>
</evidence>
<evidence type="ECO:0007744" key="22">
    <source>
    </source>
</evidence>
<evidence type="ECO:0007744" key="23">
    <source>
    </source>
</evidence>
<evidence type="ECO:0007744" key="24">
    <source>
    </source>
</evidence>
<evidence type="ECO:0007744" key="25">
    <source>
    </source>
</evidence>
<evidence type="ECO:0007829" key="26">
    <source>
        <dbReference type="PDB" id="1MFN"/>
    </source>
</evidence>
<name>FINC_MOUSE</name>
<feature type="signal peptide" evidence="2">
    <location>
        <begin position="1"/>
        <end position="32"/>
    </location>
</feature>
<feature type="chain" id="PRO_0000019236" description="Fibronectin">
    <location>
        <begin position="33"/>
        <end position="2477"/>
    </location>
</feature>
<feature type="chain" id="PRO_0000390480" description="Anastellin" evidence="1">
    <location>
        <begin position="627"/>
        <end position="701"/>
    </location>
</feature>
<feature type="domain" description="Fibronectin type-I 1" evidence="6">
    <location>
        <begin position="51"/>
        <end position="91"/>
    </location>
</feature>
<feature type="domain" description="Fibronectin type-I 2" evidence="6">
    <location>
        <begin position="96"/>
        <end position="139"/>
    </location>
</feature>
<feature type="domain" description="Fibronectin type-I 3" evidence="6">
    <location>
        <begin position="140"/>
        <end position="183"/>
    </location>
</feature>
<feature type="domain" description="Fibronectin type-I 4" evidence="6">
    <location>
        <begin position="185"/>
        <end position="229"/>
    </location>
</feature>
<feature type="domain" description="Fibronectin type-I 5" evidence="6">
    <location>
        <begin position="230"/>
        <end position="274"/>
    </location>
</feature>
<feature type="domain" description="Fibronectin type-I 6" evidence="6">
    <location>
        <begin position="306"/>
        <end position="343"/>
    </location>
</feature>
<feature type="domain" description="Fibronectin type-II 1" evidence="6 7">
    <location>
        <begin position="355"/>
        <end position="403"/>
    </location>
</feature>
<feature type="domain" description="Fibronectin type-II 2" evidence="6 7">
    <location>
        <begin position="415"/>
        <end position="463"/>
    </location>
</feature>
<feature type="domain" description="Fibronectin type-I 7" evidence="6">
    <location>
        <begin position="468"/>
        <end position="516"/>
    </location>
</feature>
<feature type="domain" description="Fibronectin type-I 8" evidence="6">
    <location>
        <begin position="516"/>
        <end position="558"/>
    </location>
</feature>
<feature type="domain" description="Fibronectin type-I 9" evidence="6">
    <location>
        <begin position="559"/>
        <end position="602"/>
    </location>
</feature>
<feature type="domain" description="Fibronectin type-III 1">
    <location>
        <begin position="610"/>
        <end position="717"/>
    </location>
</feature>
<feature type="domain" description="Fibronectin type-III 2" evidence="5 6 7">
    <location>
        <begin position="721"/>
        <end position="811"/>
    </location>
</feature>
<feature type="domain" description="Fibronectin type-III 3" evidence="5 6 7">
    <location>
        <begin position="812"/>
        <end position="903"/>
    </location>
</feature>
<feature type="domain" description="Fibronectin type-III 4" evidence="5 6 7">
    <location>
        <begin position="908"/>
        <end position="997"/>
    </location>
</feature>
<feature type="domain" description="Fibronectin type-III 5" evidence="5 6 7">
    <location>
        <begin position="998"/>
        <end position="1087"/>
    </location>
</feature>
<feature type="domain" description="Fibronectin type-III 6" evidence="5 6 7">
    <location>
        <begin position="1088"/>
        <end position="1174"/>
    </location>
</feature>
<feature type="domain" description="Fibronectin type-III 7" evidence="5 6 7">
    <location>
        <begin position="1175"/>
        <end position="1269"/>
    </location>
</feature>
<feature type="domain" description="Fibronectin type-III 8; extra domain B" evidence="5 6 7">
    <location>
        <begin position="1270"/>
        <end position="1358"/>
    </location>
</feature>
<feature type="domain" description="Fibronectin type-III 9" evidence="5 6 7">
    <location>
        <begin position="1359"/>
        <end position="1451"/>
    </location>
</feature>
<feature type="domain" description="Fibronectin type-III 10" evidence="5">
    <location>
        <begin position="1452"/>
        <end position="1539"/>
    </location>
</feature>
<feature type="domain" description="Fibronectin type-III 11" evidence="5">
    <location>
        <begin position="1540"/>
        <end position="1633"/>
    </location>
</feature>
<feature type="domain" description="Fibronectin type-III 12" evidence="5">
    <location>
        <begin position="1634"/>
        <end position="1725"/>
    </location>
</feature>
<feature type="domain" description="Fibronectin type-III 13; extra domain A" evidence="5 6 7">
    <location>
        <begin position="1726"/>
        <end position="1813"/>
    </location>
</feature>
<feature type="domain" description="Fibronectin type-III 14" evidence="5">
    <location>
        <begin position="1814"/>
        <end position="1907"/>
    </location>
</feature>
<feature type="domain" description="Fibronectin type-III 15" evidence="5">
    <location>
        <begin position="1908"/>
        <end position="1994"/>
    </location>
</feature>
<feature type="domain" description="Fibronectin type-III 16" evidence="5">
    <location>
        <begin position="1995"/>
        <end position="2085"/>
    </location>
</feature>
<feature type="domain" description="Fibronectin type-III 17" evidence="5">
    <location>
        <begin position="2193"/>
        <end position="2287"/>
    </location>
</feature>
<feature type="domain" description="Fibronectin type-I 10" evidence="6">
    <location>
        <begin position="2294"/>
        <end position="2338"/>
    </location>
</feature>
<feature type="domain" description="Fibronectin type-I 11" evidence="6">
    <location>
        <begin position="2339"/>
        <end position="2381"/>
    </location>
</feature>
<feature type="domain" description="Fibronectin type-I 12" evidence="6">
    <location>
        <begin position="2383"/>
        <end position="2426"/>
    </location>
</feature>
<feature type="DNA-binding region">
    <location>
        <begin position="906"/>
        <end position="1171"/>
    </location>
</feature>
<feature type="region of interest" description="Fibrin- and heparin-binding 1">
    <location>
        <begin position="53"/>
        <end position="273"/>
    </location>
</feature>
<feature type="region of interest" description="Required for binding to Lilrb4a" evidence="2">
    <location>
        <begin position="124"/>
        <end position="143"/>
    </location>
</feature>
<feature type="region of interest" description="Collagen-binding">
    <location>
        <begin position="308"/>
        <end position="608"/>
    </location>
</feature>
<feature type="region of interest" description="Cell-attachment">
    <location>
        <begin position="1357"/>
        <end position="1630"/>
    </location>
</feature>
<feature type="region of interest" description="Disordered" evidence="8">
    <location>
        <begin position="1661"/>
        <end position="1684"/>
    </location>
</feature>
<feature type="region of interest" description="Heparin-binding 2">
    <location>
        <begin position="1811"/>
        <end position="2081"/>
    </location>
</feature>
<feature type="region of interest" description="V region (type III connecting segment, IIICS)">
    <location>
        <begin position="2082"/>
        <end position="2201"/>
    </location>
</feature>
<feature type="region of interest" description="Fibrin-binding 2">
    <location>
        <begin position="2296"/>
        <end position="2427"/>
    </location>
</feature>
<feature type="short sequence motif" description="Cell attachment site">
    <location>
        <begin position="1614"/>
        <end position="1616"/>
    </location>
</feature>
<feature type="short sequence motif" description="Cell attachment site">
    <location>
        <begin position="2181"/>
        <end position="2183"/>
    </location>
</feature>
<feature type="modified residue" description="Pyrrolidone carboxylic acid" evidence="2">
    <location>
        <position position="33"/>
    </location>
</feature>
<feature type="modified residue" description="Phosphoserine" evidence="25">
    <location>
        <position position="285"/>
    </location>
</feature>
<feature type="modified residue" description="Sulfotyrosine" evidence="4">
    <location>
        <position position="875"/>
    </location>
</feature>
<feature type="modified residue" description="Sulfotyrosine" evidence="4">
    <location>
        <position position="880"/>
    </location>
</feature>
<feature type="modified residue" description="Sulfotyrosine" evidence="4">
    <location>
        <position position="2392"/>
    </location>
</feature>
<feature type="modified residue" description="Phosphothreonine" evidence="2">
    <location>
        <position position="2454"/>
    </location>
</feature>
<feature type="modified residue" description="Phosphoserine" evidence="22 23 24 25">
    <location>
        <position position="2475"/>
    </location>
</feature>
<feature type="glycosylation site" description="N-linked (GlcNAc...) asparagine" evidence="4">
    <location>
        <position position="430"/>
    </location>
</feature>
<feature type="glycosylation site" description="N-linked (GlcNAc...) asparagine" evidence="10 12">
    <location>
        <position position="528"/>
    </location>
</feature>
<feature type="glycosylation site" description="N-linked (GlcNAc...) asparagine" evidence="4">
    <location>
        <position position="542"/>
    </location>
</feature>
<feature type="glycosylation site" description="N-linked (GlcNAc...) asparagine" evidence="4">
    <location>
        <position position="876"/>
    </location>
</feature>
<feature type="glycosylation site" description="N-linked (GlcNAc...) asparagine" evidence="9 11 12">
    <location>
        <position position="1006"/>
    </location>
</feature>
<feature type="glycosylation site" description="N-linked (GlcNAc...) asparagine" evidence="4">
    <location>
        <position position="1243"/>
    </location>
</feature>
<feature type="glycosylation site" description="N-linked (GlcNAc...) asparagine" evidence="11 12">
    <location>
        <position position="1290"/>
    </location>
</feature>
<feature type="glycosylation site" description="N-linked (GlcNAc...) asparagine" evidence="12">
    <location>
        <position position="2198"/>
    </location>
</feature>
<feature type="disulfide bond" evidence="2">
    <location>
        <begin position="53"/>
        <end position="79"/>
    </location>
</feature>
<feature type="disulfide bond" evidence="2">
    <location>
        <begin position="77"/>
        <end position="88"/>
    </location>
</feature>
<feature type="disulfide bond" evidence="2">
    <location>
        <begin position="98"/>
        <end position="126"/>
    </location>
</feature>
<feature type="disulfide bond" evidence="2">
    <location>
        <begin position="124"/>
        <end position="136"/>
    </location>
</feature>
<feature type="disulfide bond" evidence="2">
    <location>
        <begin position="142"/>
        <end position="170"/>
    </location>
</feature>
<feature type="disulfide bond" evidence="2">
    <location>
        <begin position="168"/>
        <end position="180"/>
    </location>
</feature>
<feature type="disulfide bond" evidence="2">
    <location>
        <begin position="187"/>
        <end position="216"/>
    </location>
</feature>
<feature type="disulfide bond" evidence="2">
    <location>
        <begin position="214"/>
        <end position="226"/>
    </location>
</feature>
<feature type="disulfide bond" evidence="2">
    <location>
        <begin position="232"/>
        <end position="261"/>
    </location>
</feature>
<feature type="disulfide bond" evidence="2">
    <location>
        <begin position="259"/>
        <end position="271"/>
    </location>
</feature>
<feature type="disulfide bond" evidence="2">
    <location>
        <begin position="308"/>
        <end position="335"/>
    </location>
</feature>
<feature type="disulfide bond" evidence="2">
    <location>
        <begin position="333"/>
        <end position="342"/>
    </location>
</feature>
<feature type="disulfide bond" evidence="2">
    <location>
        <begin position="360"/>
        <end position="386"/>
    </location>
</feature>
<feature type="disulfide bond" evidence="2">
    <location>
        <begin position="374"/>
        <end position="401"/>
    </location>
</feature>
<feature type="disulfide bond" evidence="2">
    <location>
        <begin position="420"/>
        <end position="446"/>
    </location>
</feature>
<feature type="disulfide bond" evidence="2">
    <location>
        <begin position="434"/>
        <end position="461"/>
    </location>
</feature>
<feature type="disulfide bond" evidence="6">
    <location>
        <begin position="470"/>
        <end position="498"/>
    </location>
</feature>
<feature type="disulfide bond" evidence="6">
    <location>
        <begin position="496"/>
        <end position="508"/>
    </location>
</feature>
<feature type="disulfide bond" evidence="6">
    <location>
        <begin position="518"/>
        <end position="545"/>
    </location>
</feature>
<feature type="disulfide bond" evidence="6">
    <location>
        <begin position="543"/>
        <end position="555"/>
    </location>
</feature>
<feature type="disulfide bond" evidence="6">
    <location>
        <begin position="561"/>
        <end position="589"/>
    </location>
</feature>
<feature type="disulfide bond" evidence="6">
    <location>
        <begin position="587"/>
        <end position="599"/>
    </location>
</feature>
<feature type="disulfide bond" evidence="6">
    <location>
        <begin position="2296"/>
        <end position="2325"/>
    </location>
</feature>
<feature type="disulfide bond" evidence="6">
    <location>
        <begin position="2323"/>
        <end position="2335"/>
    </location>
</feature>
<feature type="disulfide bond" evidence="6">
    <location>
        <begin position="2341"/>
        <end position="2368"/>
    </location>
</feature>
<feature type="disulfide bond" evidence="6">
    <location>
        <begin position="2366"/>
        <end position="2378"/>
    </location>
</feature>
<feature type="disulfide bond" evidence="1">
    <location>
        <begin position="2385"/>
        <end position="2411"/>
    </location>
</feature>
<feature type="disulfide bond" evidence="1">
    <location>
        <begin position="2409"/>
        <end position="2420"/>
    </location>
</feature>
<feature type="disulfide bond" description="Interchain (with C-2462)">
    <location>
        <position position="2458"/>
    </location>
</feature>
<feature type="disulfide bond" description="Interchain (with C-2458)">
    <location>
        <position position="2462"/>
    </location>
</feature>
<feature type="cross-link" description="Isoglutamyl lysine isopeptide (Gln-Lys) (interchain with K-?)" evidence="19">
    <location>
        <position position="35"/>
    </location>
</feature>
<feature type="cross-link" description="Isoglutamyl lysine isopeptide (Gln-Lys) (interchain with K-?)" evidence="19">
    <location>
        <position position="36"/>
    </location>
</feature>
<feature type="cross-link" description="Isoglutamyl lysine isopeptide (Gln-Lys) (interchain with K-?)" evidence="19">
    <location>
        <position position="48"/>
    </location>
</feature>
<feature type="mutagenesis site" description="99% decrease in cross-linking efficiency; when associated with A-36 and A-48." evidence="19">
    <original>Q</original>
    <variation>A</variation>
    <location>
        <position position="35"/>
    </location>
</feature>
<feature type="mutagenesis site" description="65% decrease in cross-linking efficiency; when associated with L-36." evidence="19">
    <original>Q</original>
    <variation>L</variation>
    <location>
        <position position="35"/>
    </location>
</feature>
<feature type="mutagenesis site" description="99% decrease in cross-linking efficiency; when associated with A-35 and A-48." evidence="19">
    <original>Q</original>
    <variation>A</variation>
    <location>
        <position position="36"/>
    </location>
</feature>
<feature type="mutagenesis site" description="65% decrease in cross-linking efficiency; when associated with L-35." evidence="19">
    <original>Q</original>
    <variation>L</variation>
    <location>
        <position position="36"/>
    </location>
</feature>
<feature type="mutagenesis site" description="99% decrease in cross-linking efficiency; when associated with A-35 and A-36." evidence="19">
    <original>Q</original>
    <variation>A</variation>
    <location>
        <position position="48"/>
    </location>
</feature>
<feature type="sequence conflict" description="In Ref. 6; CAA63654." evidence="20" ref="6">
    <original>V</original>
    <variation>A</variation>
    <location>
        <position position="1063"/>
    </location>
</feature>
<feature type="sequence conflict" description="In Ref. 6; CAA63654." evidence="20" ref="6">
    <original>F</original>
    <variation>L</variation>
    <location>
        <position position="1820"/>
    </location>
</feature>
<feature type="sequence conflict" description="In Ref. 7; AAA37636." evidence="20" ref="7">
    <original>T</original>
    <variation>N</variation>
    <location>
        <position position="2440"/>
    </location>
</feature>
<feature type="strand" evidence="26">
    <location>
        <begin position="1455"/>
        <end position="1459"/>
    </location>
</feature>
<feature type="strand" evidence="26">
    <location>
        <begin position="1461"/>
        <end position="1467"/>
    </location>
</feature>
<feature type="strand" evidence="26">
    <location>
        <begin position="1476"/>
        <end position="1484"/>
    </location>
</feature>
<feature type="strand" evidence="26">
    <location>
        <begin position="1492"/>
        <end position="1496"/>
    </location>
</feature>
<feature type="strand" evidence="26">
    <location>
        <begin position="1501"/>
        <end position="1507"/>
    </location>
</feature>
<feature type="strand" evidence="26">
    <location>
        <begin position="1510"/>
        <end position="1521"/>
    </location>
</feature>
<feature type="strand" evidence="26">
    <location>
        <begin position="1530"/>
        <end position="1536"/>
    </location>
</feature>
<feature type="strand" evidence="26">
    <location>
        <begin position="1545"/>
        <end position="1550"/>
    </location>
</feature>
<feature type="strand" evidence="26">
    <location>
        <begin position="1553"/>
        <end position="1557"/>
    </location>
</feature>
<feature type="strand" evidence="26">
    <location>
        <begin position="1567"/>
        <end position="1580"/>
    </location>
</feature>
<feature type="strand" evidence="26">
    <location>
        <begin position="1582"/>
        <end position="1586"/>
    </location>
</feature>
<feature type="strand" evidence="26">
    <location>
        <begin position="1591"/>
        <end position="1594"/>
    </location>
</feature>
<feature type="strand" evidence="26">
    <location>
        <begin position="1600"/>
        <end position="1612"/>
    </location>
</feature>
<feature type="strand" evidence="26">
    <location>
        <begin position="1615"/>
        <end position="1617"/>
    </location>
</feature>
<feature type="strand" evidence="26">
    <location>
        <begin position="1624"/>
        <end position="1630"/>
    </location>
</feature>
<sequence length="2477" mass="272538">MLRGPGPGRLLLLAVLCLGTSVRCTEAGKSKRQAQQIVQPQSPVAVSQSKPGCFDNGKHYQINQQWERTYLGNALVCTCYGGSRGFNCESKPEPEETCFDKYTGNTYKVGDTYERPKDSMIWDCTCIGAGRGRISCTIANRCHEGGQSYKIGDKWRRPHETGGYMLECLCLGNGKGEWTCKPIAEKCFDHAAGTSYVVGETWEKPYQGWMMVDCTCLGEGNGRITCTSRNRCNDQDTRTSYRIGDTWSKKDNRGNLLQCVCTGNGRGEWKCERHALQSASAGSGSFTDVRTAIYQPQTHPQPAPYGHCVTDSGVVYSVGMQWLKSQGNKQMLCTCLGNGVSCQETAVTQTYGGNSNGEPCVLPFTYNGRTFYSCTTEGRQDGHLWCSTTSNYEQDQKYSFCTDHAVLVQTRGGNSNGALCHFPFLYNNRNYTDCTSEGRRDNMKWCGTTQNYDADQKFGFCPMAAHEEICTTNEGVMYRIGDQWDKQHDLGHMMRCTCVGNGRGEWACIPYSQLRDQCIVDDITYNVNDTFHKRHEEGHMLNCTCFGQGRGRWKCDPIDQCQDSETRTFYQIGDSWEKFVHGVRYQCYCYGRGIGEWHCQPLQTYPGTTGPVQVIITETPSQPNSHPIQWNAPEPSHITKYILRWRPKTSTGRWKEATIPGHLNSYTIKGLTPGVIYEGQLISIQQYGHREVTRFDFTTSASTPVTSNTVTGETAPYSPVVATSESVTEITASSFVVSWVSASDTVSGFRVEYELSEEGDEPQYLDLPSTATSVNIPDLLPGRKYIVNVYQISEEGKQSLILSTSQTTAPDAPPDPTVDQVDDTSIVVRWSRPQAPITGYRIVYSPSVEGSSTELNLPETANSVTLSDLQPGVQYNITIYAVEENQESTPVFIQQETTGTPRSDNVPPPTDLQFVELTDVKVTIMWTPPDSVVSGYRVEVLPVSLPGEHGQRLPVNRNTFAEITGLSPGVTYLFKVFAVHQGRESNPLTAQQTTKLDAPTNLQFVNETDRTVLVTWTPPRARIAGYRLTAGLTRGGQPKQYNVGPLASKYPLRNLQPGSEYTVTLVAVKGNQQSPKATGVFTTLQPLRSIPPYNTEVTETTIVITWTPAPRIGFKLGVRPSQGGEAPREVTSDSGSIVVSGLTPGVEYTYTIQVLRDGQERDAPIVNRVVTPLSPPTNLHLEANPDTGVLTVSWERSTTPDITGYRITTTPTNGQQGTSLEEVVHADQSSCTFENLNPGLEYNVSVYTVKDDKESAPISDTVVPEVPQLTDLSFVDITDSSIGLRWTPLNSSTIIGYRITVVAAGEGIPIFEDFVDSSVGYYTVTGLEPGIDYDISVITLINGGESAPTTLTQQTAVPPPTDLRFTNIGPDTMRVTWAPPPSIELTNLLVRYSPVKNEEDVAELSISPSDNAVVLTNLLPGTEYLVSVSSVYEQHESIPLRGRQKTGLDSPTGFDSSDITANSFTVHWVAPRAPITGYIIRHHAEHSVGRPRQDRVPPSRNSITLTNLNPGTEYVVSIIAVNGREESPPLIGQQATVSDIPRDLEVIASTPTSLLISWEPPAVSVRYYRITYGETGGNSPVQEFTVPGSKSTATINNIKPGADYTITLYAVTGRGDSPASSKPVSINYKTEIDKPSQMQVTDVQDNSISVRWLPSTSPVTGYRVTTTPKNGLGPSKTKTASPDQTEMTIEGLQPTVEYVVSVYAQNRNGESQPLVQTAVTNIDRPKGLAFTDVDVDSIKIAWESPQGQVSRYRVTYSSPEDGIRELFPAPDGEDDTAELQGLRPGSEYTVSVVALHDDMESQPLIGIQSTAIPAPTNLKFSQVTPTSFTAQWIAPSVQLTGYRVRVNPKEKTGPMKEINLSPDSSSVIVSGLMVATKYEVSVYALKDTLTSRPAQGVITTLENVSPPRRARVTDATETTITISWRTKTETITGFQVDAIPANGQTPVQRSISPDVRSYTITGLQPGTDYKIHLYTLNDNARSSPVIIDASTAIDAPSNLRFLTTTPNSLLVSWQAPRARITGYIIKYEKPGSPPREVVPRPRPGVTEATITGLEPGTEYTIYVIALKNNQKSEPLIGRKKTDELPQLVTLPHPNLHGPEILDVPSTVQKTPFITNPGYDTENGIQLPGTTHQQPSVGQQMIFEEHGFRRTTPPTAATPVRLRPRPYLPNVDEEVQIGHVPRGDVDYHLYPHVPGLNPNASTGQEALSQTTISWTPFQESSEYIISCQPVGTDEEPLQFQVPGTSTSATLTGLTRGVTYNIIVEALQNQRRHKVREEVVTVGNAVSEGLNQPTDDSCFDPYTVSHYAIGEEWERLSDAGFKLTCQCLGFGSGHFRCDSSKWCHDNGVNYKIGEKWDRQGENGQRMSCTCLGNGKGEFKCDPHEATCYDDGKTYHVGEQWQKEYLGAICSCTCFGGQRGWRCDNCRRPGAAEPSPDGTTGHTYNQYTQRYNQRTNTNVNCPIECFMPLDVQADRDDSRE</sequence>